<name>UXAC_YERPB</name>
<dbReference type="EC" id="5.3.1.12" evidence="1"/>
<dbReference type="EMBL" id="CP001048">
    <property type="protein sequence ID" value="ACC90616.1"/>
    <property type="molecule type" value="Genomic_DNA"/>
</dbReference>
<dbReference type="RefSeq" id="WP_002210410.1">
    <property type="nucleotide sequence ID" value="NZ_CP009780.1"/>
</dbReference>
<dbReference type="SMR" id="B2K3C6"/>
<dbReference type="GeneID" id="57974037"/>
<dbReference type="KEGG" id="ypb:YPTS_3663"/>
<dbReference type="PATRIC" id="fig|502801.10.peg.3112"/>
<dbReference type="UniPathway" id="UPA00246"/>
<dbReference type="GO" id="GO:0008880">
    <property type="term" value="F:glucuronate isomerase activity"/>
    <property type="evidence" value="ECO:0007669"/>
    <property type="project" value="UniProtKB-UniRule"/>
</dbReference>
<dbReference type="GO" id="GO:0019698">
    <property type="term" value="P:D-galacturonate catabolic process"/>
    <property type="evidence" value="ECO:0007669"/>
    <property type="project" value="TreeGrafter"/>
</dbReference>
<dbReference type="GO" id="GO:0042840">
    <property type="term" value="P:D-glucuronate catabolic process"/>
    <property type="evidence" value="ECO:0007669"/>
    <property type="project" value="TreeGrafter"/>
</dbReference>
<dbReference type="Gene3D" id="3.20.20.140">
    <property type="entry name" value="Metal-dependent hydrolases"/>
    <property type="match status" value="1"/>
</dbReference>
<dbReference type="Gene3D" id="1.10.2020.10">
    <property type="entry name" value="uronate isomerase, domain 2, chain A"/>
    <property type="match status" value="1"/>
</dbReference>
<dbReference type="HAMAP" id="MF_00675">
    <property type="entry name" value="UxaC"/>
    <property type="match status" value="1"/>
</dbReference>
<dbReference type="InterPro" id="IPR032466">
    <property type="entry name" value="Metal_Hydrolase"/>
</dbReference>
<dbReference type="InterPro" id="IPR003766">
    <property type="entry name" value="Uronate_isomerase"/>
</dbReference>
<dbReference type="NCBIfam" id="NF002794">
    <property type="entry name" value="PRK02925.1"/>
    <property type="match status" value="1"/>
</dbReference>
<dbReference type="PANTHER" id="PTHR30068">
    <property type="entry name" value="URONATE ISOMERASE"/>
    <property type="match status" value="1"/>
</dbReference>
<dbReference type="PANTHER" id="PTHR30068:SF4">
    <property type="entry name" value="URONATE ISOMERASE"/>
    <property type="match status" value="1"/>
</dbReference>
<dbReference type="Pfam" id="PF02614">
    <property type="entry name" value="UxaC"/>
    <property type="match status" value="1"/>
</dbReference>
<dbReference type="SUPFAM" id="SSF51556">
    <property type="entry name" value="Metallo-dependent hydrolases"/>
    <property type="match status" value="1"/>
</dbReference>
<accession>B2K3C6</accession>
<feature type="chain" id="PRO_1000131616" description="Uronate isomerase">
    <location>
        <begin position="1"/>
        <end position="469"/>
    </location>
</feature>
<proteinExistence type="inferred from homology"/>
<sequence length="469" mass="53475">MSQFLTEDFLLDTEFARRLYHDYAKDQPIFDYHCHLPPEQIAENYRFKNMYDIWLKGDHYKWRAMRTNGVAERLCTGDASDREKFDAWAATVPHTIGNPLYHWTHLELRRPFGITGKLLSPATSEEIWQRGNELLAQDPFSARGIMQQMNVKMVGTTDDPIDDLRHHKAIAADGSFNIKVLPSWRPDKAFNIEAAGFNDYMQRLEAAADTSISRFADLCVALNKRMDHFAAHGCKVSDHALDVVVYGEADETTLDAILARRLAGNQPSTEEIAQFKTAVLLFLSGEYHRREWVQQYHIGALRNNNSRMFNLVGPDIGFDSINDQPLAQPLSRLLDAQGLRNALPKTILYCLNPRDNEVIGTMVGNFQGEGEAGKMQFGSGWWFNDQKDGMQRQMTQLAQLGLLSRFVGMLTDSRSFLSYTRHEYFRRILCQMIGRWVADGEAPADIALLGAMVKNICFDNAQQYFAIEL</sequence>
<keyword id="KW-0413">Isomerase</keyword>
<organism>
    <name type="scientific">Yersinia pseudotuberculosis serotype IB (strain PB1/+)</name>
    <dbReference type="NCBI Taxonomy" id="502801"/>
    <lineage>
        <taxon>Bacteria</taxon>
        <taxon>Pseudomonadati</taxon>
        <taxon>Pseudomonadota</taxon>
        <taxon>Gammaproteobacteria</taxon>
        <taxon>Enterobacterales</taxon>
        <taxon>Yersiniaceae</taxon>
        <taxon>Yersinia</taxon>
    </lineage>
</organism>
<comment type="catalytic activity">
    <reaction evidence="1">
        <text>D-glucuronate = D-fructuronate</text>
        <dbReference type="Rhea" id="RHEA:13049"/>
        <dbReference type="ChEBI" id="CHEBI:58720"/>
        <dbReference type="ChEBI" id="CHEBI:59863"/>
        <dbReference type="EC" id="5.3.1.12"/>
    </reaction>
</comment>
<comment type="catalytic activity">
    <reaction evidence="1">
        <text>aldehydo-D-galacturonate = keto-D-tagaturonate</text>
        <dbReference type="Rhea" id="RHEA:27702"/>
        <dbReference type="ChEBI" id="CHEBI:12952"/>
        <dbReference type="ChEBI" id="CHEBI:17886"/>
        <dbReference type="EC" id="5.3.1.12"/>
    </reaction>
</comment>
<comment type="pathway">
    <text evidence="1">Carbohydrate metabolism; pentose and glucuronate interconversion.</text>
</comment>
<comment type="similarity">
    <text evidence="1">Belongs to the metallo-dependent hydrolases superfamily. Uronate isomerase family.</text>
</comment>
<evidence type="ECO:0000255" key="1">
    <source>
        <dbReference type="HAMAP-Rule" id="MF_00675"/>
    </source>
</evidence>
<protein>
    <recommendedName>
        <fullName evidence="1">Uronate isomerase</fullName>
        <ecNumber evidence="1">5.3.1.12</ecNumber>
    </recommendedName>
    <alternativeName>
        <fullName evidence="1">Glucuronate isomerase</fullName>
    </alternativeName>
    <alternativeName>
        <fullName evidence="1">Uronic isomerase</fullName>
    </alternativeName>
</protein>
<reference key="1">
    <citation type="submission" date="2008-04" db="EMBL/GenBank/DDBJ databases">
        <title>Complete sequence of Yersinia pseudotuberculosis PB1/+.</title>
        <authorList>
            <person name="Copeland A."/>
            <person name="Lucas S."/>
            <person name="Lapidus A."/>
            <person name="Glavina del Rio T."/>
            <person name="Dalin E."/>
            <person name="Tice H."/>
            <person name="Bruce D."/>
            <person name="Goodwin L."/>
            <person name="Pitluck S."/>
            <person name="Munk A.C."/>
            <person name="Brettin T."/>
            <person name="Detter J.C."/>
            <person name="Han C."/>
            <person name="Tapia R."/>
            <person name="Schmutz J."/>
            <person name="Larimer F."/>
            <person name="Land M."/>
            <person name="Hauser L."/>
            <person name="Challacombe J.F."/>
            <person name="Green L."/>
            <person name="Lindler L.E."/>
            <person name="Nikolich M.P."/>
            <person name="Richardson P."/>
        </authorList>
    </citation>
    <scope>NUCLEOTIDE SEQUENCE [LARGE SCALE GENOMIC DNA]</scope>
    <source>
        <strain>PB1/+</strain>
    </source>
</reference>
<gene>
    <name evidence="1" type="primary">uxaC</name>
    <name type="ordered locus">YPTS_3663</name>
</gene>